<gene>
    <name type="ordered locus">Avi_4174</name>
</gene>
<keyword id="KW-0456">Lyase</keyword>
<keyword id="KW-1185">Reference proteome</keyword>
<organism>
    <name type="scientific">Allorhizobium ampelinum (strain ATCC BAA-846 / DSM 112012 / S4)</name>
    <name type="common">Agrobacterium vitis (strain S4)</name>
    <dbReference type="NCBI Taxonomy" id="311402"/>
    <lineage>
        <taxon>Bacteria</taxon>
        <taxon>Pseudomonadati</taxon>
        <taxon>Pseudomonadota</taxon>
        <taxon>Alphaproteobacteria</taxon>
        <taxon>Hyphomicrobiales</taxon>
        <taxon>Rhizobiaceae</taxon>
        <taxon>Rhizobium/Agrobacterium group</taxon>
        <taxon>Allorhizobium</taxon>
        <taxon>Allorhizobium ampelinum</taxon>
    </lineage>
</organism>
<accession>B9JUA0</accession>
<evidence type="ECO:0000255" key="1">
    <source>
        <dbReference type="HAMAP-Rule" id="MF_00434"/>
    </source>
</evidence>
<protein>
    <recommendedName>
        <fullName evidence="1">Putative pterin-4-alpha-carbinolamine dehydratase</fullName>
        <shortName evidence="1">PHS</shortName>
        <ecNumber evidence="1">4.2.1.96</ecNumber>
    </recommendedName>
    <alternativeName>
        <fullName evidence="1">4-alpha-hydroxy-tetrahydropterin dehydratase</fullName>
    </alternativeName>
    <alternativeName>
        <fullName evidence="1">Pterin carbinolamine dehydratase</fullName>
        <shortName evidence="1">PCD</shortName>
    </alternativeName>
</protein>
<feature type="chain" id="PRO_1000134944" description="Putative pterin-4-alpha-carbinolamine dehydratase">
    <location>
        <begin position="1"/>
        <end position="100"/>
    </location>
</feature>
<sequence>MRYERLAPEAIPGALRDLDGWSLSEQGDAITKEFSFDDFAQAFGFMTECAIIAEKMGHHPEWFNVYRRVDVRLTTHDVGGLTGHDLKLAAAMDQVAKRRV</sequence>
<proteinExistence type="inferred from homology"/>
<comment type="catalytic activity">
    <reaction evidence="1">
        <text>(4aS,6R)-4a-hydroxy-L-erythro-5,6,7,8-tetrahydrobiopterin = (6R)-L-erythro-6,7-dihydrobiopterin + H2O</text>
        <dbReference type="Rhea" id="RHEA:11920"/>
        <dbReference type="ChEBI" id="CHEBI:15377"/>
        <dbReference type="ChEBI" id="CHEBI:15642"/>
        <dbReference type="ChEBI" id="CHEBI:43120"/>
        <dbReference type="EC" id="4.2.1.96"/>
    </reaction>
</comment>
<comment type="similarity">
    <text evidence="1">Belongs to the pterin-4-alpha-carbinolamine dehydratase family.</text>
</comment>
<reference key="1">
    <citation type="journal article" date="2009" name="J. Bacteriol.">
        <title>Genome sequences of three Agrobacterium biovars help elucidate the evolution of multichromosome genomes in bacteria.</title>
        <authorList>
            <person name="Slater S.C."/>
            <person name="Goldman B.S."/>
            <person name="Goodner B."/>
            <person name="Setubal J.C."/>
            <person name="Farrand S.K."/>
            <person name="Nester E.W."/>
            <person name="Burr T.J."/>
            <person name="Banta L."/>
            <person name="Dickerman A.W."/>
            <person name="Paulsen I."/>
            <person name="Otten L."/>
            <person name="Suen G."/>
            <person name="Welch R."/>
            <person name="Almeida N.F."/>
            <person name="Arnold F."/>
            <person name="Burton O.T."/>
            <person name="Du Z."/>
            <person name="Ewing A."/>
            <person name="Godsy E."/>
            <person name="Heisel S."/>
            <person name="Houmiel K.L."/>
            <person name="Jhaveri J."/>
            <person name="Lu J."/>
            <person name="Miller N.M."/>
            <person name="Norton S."/>
            <person name="Chen Q."/>
            <person name="Phoolcharoen W."/>
            <person name="Ohlin V."/>
            <person name="Ondrusek D."/>
            <person name="Pride N."/>
            <person name="Stricklin S.L."/>
            <person name="Sun J."/>
            <person name="Wheeler C."/>
            <person name="Wilson L."/>
            <person name="Zhu H."/>
            <person name="Wood D.W."/>
        </authorList>
    </citation>
    <scope>NUCLEOTIDE SEQUENCE [LARGE SCALE GENOMIC DNA]</scope>
    <source>
        <strain>ATCC BAA-846 / DSM 112012 / S4</strain>
    </source>
</reference>
<dbReference type="EC" id="4.2.1.96" evidence="1"/>
<dbReference type="EMBL" id="CP000633">
    <property type="protein sequence ID" value="ACM38023.1"/>
    <property type="molecule type" value="Genomic_DNA"/>
</dbReference>
<dbReference type="RefSeq" id="WP_015917434.1">
    <property type="nucleotide sequence ID" value="NC_011989.1"/>
</dbReference>
<dbReference type="SMR" id="B9JUA0"/>
<dbReference type="STRING" id="311402.Avi_4174"/>
<dbReference type="KEGG" id="avi:Avi_4174"/>
<dbReference type="eggNOG" id="COG2154">
    <property type="taxonomic scope" value="Bacteria"/>
</dbReference>
<dbReference type="HOGENOM" id="CLU_081974_3_2_5"/>
<dbReference type="Proteomes" id="UP000001596">
    <property type="component" value="Chromosome 1"/>
</dbReference>
<dbReference type="GO" id="GO:0008124">
    <property type="term" value="F:4-alpha-hydroxytetrahydrobiopterin dehydratase activity"/>
    <property type="evidence" value="ECO:0007669"/>
    <property type="project" value="UniProtKB-UniRule"/>
</dbReference>
<dbReference type="GO" id="GO:0006729">
    <property type="term" value="P:tetrahydrobiopterin biosynthetic process"/>
    <property type="evidence" value="ECO:0007669"/>
    <property type="project" value="InterPro"/>
</dbReference>
<dbReference type="CDD" id="cd00914">
    <property type="entry name" value="PCD_DCoH_subfamily_b"/>
    <property type="match status" value="1"/>
</dbReference>
<dbReference type="Gene3D" id="3.30.1360.20">
    <property type="entry name" value="Transcriptional coactivator/pterin dehydratase"/>
    <property type="match status" value="1"/>
</dbReference>
<dbReference type="HAMAP" id="MF_00434">
    <property type="entry name" value="Pterin_4_alpha"/>
    <property type="match status" value="1"/>
</dbReference>
<dbReference type="InterPro" id="IPR036428">
    <property type="entry name" value="PCD_sf"/>
</dbReference>
<dbReference type="InterPro" id="IPR001533">
    <property type="entry name" value="Pterin_deHydtase"/>
</dbReference>
<dbReference type="NCBIfam" id="NF002017">
    <property type="entry name" value="PRK00823.1-2"/>
    <property type="match status" value="1"/>
</dbReference>
<dbReference type="NCBIfam" id="NF002018">
    <property type="entry name" value="PRK00823.1-3"/>
    <property type="match status" value="1"/>
</dbReference>
<dbReference type="PANTHER" id="PTHR12599">
    <property type="entry name" value="PTERIN-4-ALPHA-CARBINOLAMINE DEHYDRATASE"/>
    <property type="match status" value="1"/>
</dbReference>
<dbReference type="PANTHER" id="PTHR12599:SF0">
    <property type="entry name" value="PTERIN-4-ALPHA-CARBINOLAMINE DEHYDRATASE"/>
    <property type="match status" value="1"/>
</dbReference>
<dbReference type="Pfam" id="PF01329">
    <property type="entry name" value="Pterin_4a"/>
    <property type="match status" value="1"/>
</dbReference>
<dbReference type="SUPFAM" id="SSF55248">
    <property type="entry name" value="PCD-like"/>
    <property type="match status" value="1"/>
</dbReference>
<name>PHS_ALLAM</name>